<reference key="1">
    <citation type="journal article" date="2013" name="Nature">
        <title>The zebrafish reference genome sequence and its relationship to the human genome.</title>
        <authorList>
            <person name="Howe K."/>
            <person name="Clark M.D."/>
            <person name="Torroja C.F."/>
            <person name="Torrance J."/>
            <person name="Berthelot C."/>
            <person name="Muffato M."/>
            <person name="Collins J.E."/>
            <person name="Humphray S."/>
            <person name="McLaren K."/>
            <person name="Matthews L."/>
            <person name="McLaren S."/>
            <person name="Sealy I."/>
            <person name="Caccamo M."/>
            <person name="Churcher C."/>
            <person name="Scott C."/>
            <person name="Barrett J.C."/>
            <person name="Koch R."/>
            <person name="Rauch G.J."/>
            <person name="White S."/>
            <person name="Chow W."/>
            <person name="Kilian B."/>
            <person name="Quintais L.T."/>
            <person name="Guerra-Assuncao J.A."/>
            <person name="Zhou Y."/>
            <person name="Gu Y."/>
            <person name="Yen J."/>
            <person name="Vogel J.H."/>
            <person name="Eyre T."/>
            <person name="Redmond S."/>
            <person name="Banerjee R."/>
            <person name="Chi J."/>
            <person name="Fu B."/>
            <person name="Langley E."/>
            <person name="Maguire S.F."/>
            <person name="Laird G.K."/>
            <person name="Lloyd D."/>
            <person name="Kenyon E."/>
            <person name="Donaldson S."/>
            <person name="Sehra H."/>
            <person name="Almeida-King J."/>
            <person name="Loveland J."/>
            <person name="Trevanion S."/>
            <person name="Jones M."/>
            <person name="Quail M."/>
            <person name="Willey D."/>
            <person name="Hunt A."/>
            <person name="Burton J."/>
            <person name="Sims S."/>
            <person name="McLay K."/>
            <person name="Plumb B."/>
            <person name="Davis J."/>
            <person name="Clee C."/>
            <person name="Oliver K."/>
            <person name="Clark R."/>
            <person name="Riddle C."/>
            <person name="Elliot D."/>
            <person name="Threadgold G."/>
            <person name="Harden G."/>
            <person name="Ware D."/>
            <person name="Begum S."/>
            <person name="Mortimore B."/>
            <person name="Kerry G."/>
            <person name="Heath P."/>
            <person name="Phillimore B."/>
            <person name="Tracey A."/>
            <person name="Corby N."/>
            <person name="Dunn M."/>
            <person name="Johnson C."/>
            <person name="Wood J."/>
            <person name="Clark S."/>
            <person name="Pelan S."/>
            <person name="Griffiths G."/>
            <person name="Smith M."/>
            <person name="Glithero R."/>
            <person name="Howden P."/>
            <person name="Barker N."/>
            <person name="Lloyd C."/>
            <person name="Stevens C."/>
            <person name="Harley J."/>
            <person name="Holt K."/>
            <person name="Panagiotidis G."/>
            <person name="Lovell J."/>
            <person name="Beasley H."/>
            <person name="Henderson C."/>
            <person name="Gordon D."/>
            <person name="Auger K."/>
            <person name="Wright D."/>
            <person name="Collins J."/>
            <person name="Raisen C."/>
            <person name="Dyer L."/>
            <person name="Leung K."/>
            <person name="Robertson L."/>
            <person name="Ambridge K."/>
            <person name="Leongamornlert D."/>
            <person name="McGuire S."/>
            <person name="Gilderthorp R."/>
            <person name="Griffiths C."/>
            <person name="Manthravadi D."/>
            <person name="Nichol S."/>
            <person name="Barker G."/>
            <person name="Whitehead S."/>
            <person name="Kay M."/>
            <person name="Brown J."/>
            <person name="Murnane C."/>
            <person name="Gray E."/>
            <person name="Humphries M."/>
            <person name="Sycamore N."/>
            <person name="Barker D."/>
            <person name="Saunders D."/>
            <person name="Wallis J."/>
            <person name="Babbage A."/>
            <person name="Hammond S."/>
            <person name="Mashreghi-Mohammadi M."/>
            <person name="Barr L."/>
            <person name="Martin S."/>
            <person name="Wray P."/>
            <person name="Ellington A."/>
            <person name="Matthews N."/>
            <person name="Ellwood M."/>
            <person name="Woodmansey R."/>
            <person name="Clark G."/>
            <person name="Cooper J."/>
            <person name="Tromans A."/>
            <person name="Grafham D."/>
            <person name="Skuce C."/>
            <person name="Pandian R."/>
            <person name="Andrews R."/>
            <person name="Harrison E."/>
            <person name="Kimberley A."/>
            <person name="Garnett J."/>
            <person name="Fosker N."/>
            <person name="Hall R."/>
            <person name="Garner P."/>
            <person name="Kelly D."/>
            <person name="Bird C."/>
            <person name="Palmer S."/>
            <person name="Gehring I."/>
            <person name="Berger A."/>
            <person name="Dooley C.M."/>
            <person name="Ersan-Urun Z."/>
            <person name="Eser C."/>
            <person name="Geiger H."/>
            <person name="Geisler M."/>
            <person name="Karotki L."/>
            <person name="Kirn A."/>
            <person name="Konantz J."/>
            <person name="Konantz M."/>
            <person name="Oberlander M."/>
            <person name="Rudolph-Geiger S."/>
            <person name="Teucke M."/>
            <person name="Lanz C."/>
            <person name="Raddatz G."/>
            <person name="Osoegawa K."/>
            <person name="Zhu B."/>
            <person name="Rapp A."/>
            <person name="Widaa S."/>
            <person name="Langford C."/>
            <person name="Yang F."/>
            <person name="Schuster S.C."/>
            <person name="Carter N.P."/>
            <person name="Harrow J."/>
            <person name="Ning Z."/>
            <person name="Herrero J."/>
            <person name="Searle S.M."/>
            <person name="Enright A."/>
            <person name="Geisler R."/>
            <person name="Plasterk R.H."/>
            <person name="Lee C."/>
            <person name="Westerfield M."/>
            <person name="de Jong P.J."/>
            <person name="Zon L.I."/>
            <person name="Postlethwait J.H."/>
            <person name="Nusslein-Volhard C."/>
            <person name="Hubbard T.J."/>
            <person name="Roest Crollius H."/>
            <person name="Rogers J."/>
            <person name="Stemple D.L."/>
        </authorList>
    </citation>
    <scope>NUCLEOTIDE SEQUENCE [LARGE SCALE GENOMIC DNA]</scope>
    <source>
        <strain>Tuebingen</strain>
    </source>
</reference>
<proteinExistence type="inferred from homology"/>
<feature type="chain" id="PRO_0000416306" description="Protein-methionine sulfoxide oxidase mical3b">
    <location>
        <begin position="1"/>
        <end position="1673"/>
    </location>
</feature>
<feature type="domain" description="Calponin-homology (CH)" evidence="4">
    <location>
        <begin position="512"/>
        <end position="618"/>
    </location>
</feature>
<feature type="domain" description="LIM zinc-binding" evidence="5">
    <location>
        <begin position="791"/>
        <end position="853"/>
    </location>
</feature>
<feature type="domain" description="bMERB" evidence="6">
    <location>
        <begin position="1495"/>
        <end position="1661"/>
    </location>
</feature>
<feature type="region of interest" description="Monooxygenase domain" evidence="1">
    <location>
        <begin position="2"/>
        <end position="492"/>
    </location>
</feature>
<feature type="region of interest" description="Disordered" evidence="7">
    <location>
        <begin position="647"/>
        <end position="714"/>
    </location>
</feature>
<feature type="region of interest" description="Disordered" evidence="7">
    <location>
        <begin position="882"/>
        <end position="901"/>
    </location>
</feature>
<feature type="region of interest" description="Disordered" evidence="7">
    <location>
        <begin position="918"/>
        <end position="938"/>
    </location>
</feature>
<feature type="region of interest" description="Disordered" evidence="7">
    <location>
        <begin position="951"/>
        <end position="1100"/>
    </location>
</feature>
<feature type="region of interest" description="Disordered" evidence="7">
    <location>
        <begin position="1159"/>
        <end position="1188"/>
    </location>
</feature>
<feature type="region of interest" description="Disordered" evidence="7">
    <location>
        <begin position="1357"/>
        <end position="1393"/>
    </location>
</feature>
<feature type="coiled-coil region" evidence="3">
    <location>
        <begin position="1475"/>
        <end position="1531"/>
    </location>
</feature>
<feature type="coiled-coil region" evidence="3">
    <location>
        <begin position="1573"/>
        <end position="1638"/>
    </location>
</feature>
<feature type="compositionally biased region" description="Basic and acidic residues" evidence="7">
    <location>
        <begin position="661"/>
        <end position="671"/>
    </location>
</feature>
<feature type="compositionally biased region" description="Low complexity" evidence="7">
    <location>
        <begin position="882"/>
        <end position="892"/>
    </location>
</feature>
<feature type="compositionally biased region" description="Basic and acidic residues" evidence="7">
    <location>
        <begin position="973"/>
        <end position="992"/>
    </location>
</feature>
<feature type="compositionally biased region" description="Acidic residues" evidence="7">
    <location>
        <begin position="993"/>
        <end position="1002"/>
    </location>
</feature>
<feature type="compositionally biased region" description="Acidic residues" evidence="7">
    <location>
        <begin position="1010"/>
        <end position="1041"/>
    </location>
</feature>
<feature type="compositionally biased region" description="Low complexity" evidence="7">
    <location>
        <begin position="1081"/>
        <end position="1094"/>
    </location>
</feature>
<feature type="compositionally biased region" description="Polar residues" evidence="7">
    <location>
        <begin position="1159"/>
        <end position="1182"/>
    </location>
</feature>
<feature type="binding site" evidence="1">
    <location>
        <begin position="96"/>
        <end position="124"/>
    </location>
    <ligand>
        <name>FAD</name>
        <dbReference type="ChEBI" id="CHEBI:57692"/>
    </ligand>
</feature>
<feature type="binding site" evidence="1">
    <location>
        <position position="96"/>
    </location>
    <ligand>
        <name>FAD</name>
        <dbReference type="ChEBI" id="CHEBI:57692"/>
    </ligand>
</feature>
<feature type="binding site" evidence="1">
    <location>
        <position position="115"/>
    </location>
    <ligand>
        <name>FAD</name>
        <dbReference type="ChEBI" id="CHEBI:57692"/>
    </ligand>
</feature>
<feature type="binding site" evidence="1">
    <location>
        <position position="117"/>
    </location>
    <ligand>
        <name>FAD</name>
        <dbReference type="ChEBI" id="CHEBI:57692"/>
    </ligand>
</feature>
<feature type="binding site" evidence="1">
    <location>
        <position position="122"/>
    </location>
    <ligand>
        <name>FAD</name>
        <dbReference type="ChEBI" id="CHEBI:57692"/>
    </ligand>
</feature>
<feature type="binding site" evidence="1">
    <location>
        <position position="124"/>
    </location>
    <ligand>
        <name>FAD</name>
        <dbReference type="ChEBI" id="CHEBI:57692"/>
    </ligand>
</feature>
<feature type="binding site" evidence="1">
    <location>
        <position position="396"/>
    </location>
    <ligand>
        <name>FAD</name>
        <dbReference type="ChEBI" id="CHEBI:57692"/>
    </ligand>
</feature>
<keyword id="KW-0009">Actin-binding</keyword>
<keyword id="KW-0175">Coiled coil</keyword>
<keyword id="KW-0963">Cytoplasm</keyword>
<keyword id="KW-0206">Cytoskeleton</keyword>
<keyword id="KW-0268">Exocytosis</keyword>
<keyword id="KW-0274">FAD</keyword>
<keyword id="KW-0285">Flavoprotein</keyword>
<keyword id="KW-0440">LIM domain</keyword>
<keyword id="KW-0479">Metal-binding</keyword>
<keyword id="KW-0503">Monooxygenase</keyword>
<keyword id="KW-0521">NADP</keyword>
<keyword id="KW-0539">Nucleus</keyword>
<keyword id="KW-0560">Oxidoreductase</keyword>
<keyword id="KW-1185">Reference proteome</keyword>
<keyword id="KW-0862">Zinc</keyword>
<sequence>MWDGQSEMCQAHVLFDSFVQAATCKETLRAFQDLCEELNLNPGGQPQFYHTLRSRLHYWKAKALWAKLDKRACQKEYMRGHACTSTTCLIIGAGPCGLRTAIELGFLGARVVLVEKRDAFSRNNVLHLWPFTIQDLRGLGAKKFYGKFCAGAIDHISIRQLQLMLLKVALLLGVEVHVNVEFKHLLEPPENQEKRVGWRAEVQPSSHPVRQLEFDVVIGADGRRNTLPGFRRKEFRGKLAIAITANFINRNTTAEAKVEEISGVAFIFNQRFFQDLRQATGIDLENIVYYKDDTHYFVMTAKKQSLLEKGVILRDYADTEMLLSRHNVDQNALLSYAREAADFSTNHQLPALDFAINHYGQSDVAMFDFTCMYASENAAMVRQRMGHPLLVALVGDSLLEPFWPMGTGIARGFLAAMDTAWMVRSWGQGNTPLEVLAERESVYRLLPQTTPENVSKNYSQFSVDPASRYPNINMQLINAAQVRHLIDTGEGPVLGLDAVSSPHPRLTRQESMARYSKLLSWCQEHTHGYRKVCVTDFTSSWRSGLALCALIHTFRPDLIDFASLEESEAEFSGQLGLDVAEQEFGICPIMTGKEMSVLEESDSLCMVMYLSQLHELLKDTSPPSGSQSSEERAVLFSSSRSPISLLSKLGQSLSRKRNPKDKKEKEADSVGKRRRTSQAGQSEEEDALHDGNENKSPAETPGSEPKASEGHSKVRSMASLLLAKFEENSPSPSTTAIRRQNYIHMYTGGVSSLALQIANQIQSQQAQAPKLLHRRESGSQKDLPVNVGSSDVCYFCGRRVYVMERLSAEGKFFHRSCFQCDHCSSTIRLSNYTYDQLHGKFYCKHHFSFRLASVAQRKRPAPPVAPRPAQASLAASSASTSLSSLGSVGTATPDSWSSSTHTDMASSLAKRLCGTPERIELENYKPSPQKQDSPLQEVPEETLAQHNLSASLQEKNAEEQSSSSESDLEEEELVWKKGEELHARTNGERKLDLEEELKEEEGGEKLEKQEGEEEGEVSEEEQDEGDSSDESYEGCSDDPDIDVSSLSESKLCDQREQEESVPFHQSPASTESPVSMKPSESDLTPDPSTTPESSPAKRSEVVEEFWMKSAEIRKSLGLTPLSRELQPKHIAASTQTSNVKESFYTSVTYNTAALDSPNQSARICDSSTQTHSVTDLQETSPLGPTDGDAGVDLGRCSVVHRLSITVEGCVMADNQGLDSTSFATESVLNPDAGLPTPPYSPSHSPLVGKQCRALHHSEPILDREVMAFSSTCTASVPQRSSFKSDLEQAQSLPPDEIEILCGDEAEKLPERSCRMESGEVDNRRAEHSRTLPDRVVAPLLAGGPEVRLRRSEMKLWGPDADGDVKEKKRSSLFSPRKSRKNGNAAAESGRETGKHKSLWKTVFSVYKKDKKRKEVAVVAETLPAANNGSKRKVSGINRTTDLCFRKNPSFSEDTDMSCHALLERCPLRAQRAGTEEELNARLTRRVQRAARRQAKQEELRRLHRAQIIQRQLEQVEVKQRQLEEKGVAVEKALRGEADFWEDSSTSVLLDVHLCGMGKKDDPSLMHQWFKLVQEKNALVRYESELMIFARELELEDRQSRLQQELRERMAVDDHLKGEEELAEERRILSEMLDVVEQRDALVALLEEQRVREKEEDSDLEAVMLSKGFSLHWD</sequence>
<dbReference type="EC" id="1.14.13.225" evidence="2"/>
<dbReference type="EMBL" id="BX901962">
    <property type="protein sequence ID" value="CAK05184.1"/>
    <property type="status" value="ALT_SEQ"/>
    <property type="molecule type" value="Genomic_DNA"/>
</dbReference>
<dbReference type="EMBL" id="BX649444">
    <property type="protein sequence ID" value="CAK05184.1"/>
    <property type="status" value="JOINED"/>
    <property type="molecule type" value="Genomic_DNA"/>
</dbReference>
<dbReference type="EMBL" id="BX649444">
    <property type="protein sequence ID" value="CAK11365.1"/>
    <property type="status" value="ALT_SEQ"/>
    <property type="molecule type" value="Genomic_DNA"/>
</dbReference>
<dbReference type="EMBL" id="BX901962">
    <property type="protein sequence ID" value="CAK11365.1"/>
    <property type="status" value="JOINED"/>
    <property type="molecule type" value="Genomic_DNA"/>
</dbReference>
<dbReference type="SMR" id="F1QWK4"/>
<dbReference type="FunCoup" id="F1QWK4">
    <property type="interactions" value="124"/>
</dbReference>
<dbReference type="PaxDb" id="7955-ENSDARP00000122943"/>
<dbReference type="Ensembl" id="ENSDART00000147699">
    <property type="protein sequence ID" value="ENSDARP00000122943"/>
    <property type="gene ID" value="ENSDARG00000094732"/>
</dbReference>
<dbReference type="AGR" id="ZFIN:ZDB-GENE-050211-1"/>
<dbReference type="ZFIN" id="ZDB-GENE-050211-1">
    <property type="gene designation" value="mical3b"/>
</dbReference>
<dbReference type="eggNOG" id="KOG1700">
    <property type="taxonomic scope" value="Eukaryota"/>
</dbReference>
<dbReference type="HOGENOM" id="CLU_000329_3_0_1"/>
<dbReference type="InParanoid" id="F1QWK4"/>
<dbReference type="OMA" id="FYCKQHY"/>
<dbReference type="PhylomeDB" id="F1QWK4"/>
<dbReference type="TreeFam" id="TF324129"/>
<dbReference type="PRO" id="PR:F1QWK4"/>
<dbReference type="Proteomes" id="UP000000437">
    <property type="component" value="Unplaced"/>
</dbReference>
<dbReference type="Bgee" id="ENSDARG00000094732">
    <property type="expression patterns" value="Expressed in brain and 28 other cell types or tissues"/>
</dbReference>
<dbReference type="ExpressionAtlas" id="F1QWK4">
    <property type="expression patterns" value="baseline and differential"/>
</dbReference>
<dbReference type="GO" id="GO:0005737">
    <property type="term" value="C:cytoplasm"/>
    <property type="evidence" value="ECO:0007669"/>
    <property type="project" value="UniProtKB-SubCell"/>
</dbReference>
<dbReference type="GO" id="GO:0005856">
    <property type="term" value="C:cytoskeleton"/>
    <property type="evidence" value="ECO:0007669"/>
    <property type="project" value="UniProtKB-SubCell"/>
</dbReference>
<dbReference type="GO" id="GO:0005634">
    <property type="term" value="C:nucleus"/>
    <property type="evidence" value="ECO:0000250"/>
    <property type="project" value="UniProtKB"/>
</dbReference>
<dbReference type="GO" id="GO:0003779">
    <property type="term" value="F:actin binding"/>
    <property type="evidence" value="ECO:0000250"/>
    <property type="project" value="UniProtKB"/>
</dbReference>
<dbReference type="GO" id="GO:0120501">
    <property type="term" value="F:F-actin monooxygenase activity"/>
    <property type="evidence" value="ECO:0007669"/>
    <property type="project" value="UniProtKB-EC"/>
</dbReference>
<dbReference type="GO" id="GO:0071949">
    <property type="term" value="F:FAD binding"/>
    <property type="evidence" value="ECO:0000250"/>
    <property type="project" value="UniProtKB"/>
</dbReference>
<dbReference type="GO" id="GO:0046872">
    <property type="term" value="F:metal ion binding"/>
    <property type="evidence" value="ECO:0007669"/>
    <property type="project" value="UniProtKB-KW"/>
</dbReference>
<dbReference type="GO" id="GO:0016709">
    <property type="term" value="F:oxidoreductase activity, acting on paired donors, with incorporation or reduction of molecular oxygen, NAD(P)H as one donor, and incorporation of one atom of oxygen"/>
    <property type="evidence" value="ECO:0000250"/>
    <property type="project" value="UniProtKB"/>
</dbReference>
<dbReference type="GO" id="GO:0030042">
    <property type="term" value="P:actin filament depolymerization"/>
    <property type="evidence" value="ECO:0000250"/>
    <property type="project" value="UniProtKB"/>
</dbReference>
<dbReference type="GO" id="GO:0007010">
    <property type="term" value="P:cytoskeleton organization"/>
    <property type="evidence" value="ECO:0000250"/>
    <property type="project" value="UniProtKB"/>
</dbReference>
<dbReference type="GO" id="GO:0006887">
    <property type="term" value="P:exocytosis"/>
    <property type="evidence" value="ECO:0007669"/>
    <property type="project" value="UniProtKB-KW"/>
</dbReference>
<dbReference type="CDD" id="cd22198">
    <property type="entry name" value="CH_MICAL_EHBP-like"/>
    <property type="match status" value="1"/>
</dbReference>
<dbReference type="CDD" id="cd09439">
    <property type="entry name" value="LIM_Mical"/>
    <property type="match status" value="1"/>
</dbReference>
<dbReference type="FunFam" id="3.50.50.60:FF:000004">
    <property type="entry name" value="protein-methionine sulfoxide oxidase MICAL2 isoform X1"/>
    <property type="match status" value="1"/>
</dbReference>
<dbReference type="Gene3D" id="1.10.418.10">
    <property type="entry name" value="Calponin-like domain"/>
    <property type="match status" value="1"/>
</dbReference>
<dbReference type="Gene3D" id="2.10.110.10">
    <property type="entry name" value="Cysteine Rich Protein"/>
    <property type="match status" value="1"/>
</dbReference>
<dbReference type="Gene3D" id="3.50.50.60">
    <property type="entry name" value="FAD/NAD(P)-binding domain"/>
    <property type="match status" value="1"/>
</dbReference>
<dbReference type="InterPro" id="IPR022735">
    <property type="entry name" value="bMERB_dom"/>
</dbReference>
<dbReference type="InterPro" id="IPR001715">
    <property type="entry name" value="CH_dom"/>
</dbReference>
<dbReference type="InterPro" id="IPR036872">
    <property type="entry name" value="CH_dom_sf"/>
</dbReference>
<dbReference type="InterPro" id="IPR050540">
    <property type="entry name" value="F-actin_Monoox_Mical"/>
</dbReference>
<dbReference type="InterPro" id="IPR002938">
    <property type="entry name" value="FAD-bd"/>
</dbReference>
<dbReference type="InterPro" id="IPR036188">
    <property type="entry name" value="FAD/NAD-bd_sf"/>
</dbReference>
<dbReference type="InterPro" id="IPR001781">
    <property type="entry name" value="Znf_LIM"/>
</dbReference>
<dbReference type="PANTHER" id="PTHR23167:SF51">
    <property type="entry name" value="[F-ACTIN]-MONOOXYGENASE MICAL3"/>
    <property type="match status" value="1"/>
</dbReference>
<dbReference type="PANTHER" id="PTHR23167">
    <property type="entry name" value="CALPONIN HOMOLOGY DOMAIN-CONTAINING PROTEIN DDB_G0272472-RELATED"/>
    <property type="match status" value="1"/>
</dbReference>
<dbReference type="Pfam" id="PF12130">
    <property type="entry name" value="bMERB_dom"/>
    <property type="match status" value="1"/>
</dbReference>
<dbReference type="Pfam" id="PF00307">
    <property type="entry name" value="CH"/>
    <property type="match status" value="1"/>
</dbReference>
<dbReference type="Pfam" id="PF01494">
    <property type="entry name" value="FAD_binding_3"/>
    <property type="match status" value="1"/>
</dbReference>
<dbReference type="Pfam" id="PF00412">
    <property type="entry name" value="LIM"/>
    <property type="match status" value="1"/>
</dbReference>
<dbReference type="Pfam" id="PF25413">
    <property type="entry name" value="Rossman_Mical"/>
    <property type="match status" value="1"/>
</dbReference>
<dbReference type="PRINTS" id="PR00420">
    <property type="entry name" value="RNGMNOXGNASE"/>
</dbReference>
<dbReference type="SMART" id="SM00033">
    <property type="entry name" value="CH"/>
    <property type="match status" value="1"/>
</dbReference>
<dbReference type="SMART" id="SM01203">
    <property type="entry name" value="DUF3585"/>
    <property type="match status" value="1"/>
</dbReference>
<dbReference type="SMART" id="SM00132">
    <property type="entry name" value="LIM"/>
    <property type="match status" value="1"/>
</dbReference>
<dbReference type="SUPFAM" id="SSF47576">
    <property type="entry name" value="Calponin-homology domain, CH-domain"/>
    <property type="match status" value="1"/>
</dbReference>
<dbReference type="SUPFAM" id="SSF51905">
    <property type="entry name" value="FAD/NAD(P)-binding domain"/>
    <property type="match status" value="1"/>
</dbReference>
<dbReference type="SUPFAM" id="SSF57716">
    <property type="entry name" value="Glucocorticoid receptor-like (DNA-binding domain)"/>
    <property type="match status" value="1"/>
</dbReference>
<dbReference type="PROSITE" id="PS51848">
    <property type="entry name" value="BMERB"/>
    <property type="match status" value="1"/>
</dbReference>
<dbReference type="PROSITE" id="PS50021">
    <property type="entry name" value="CH"/>
    <property type="match status" value="1"/>
</dbReference>
<dbReference type="PROSITE" id="PS00478">
    <property type="entry name" value="LIM_DOMAIN_1"/>
    <property type="match status" value="1"/>
</dbReference>
<dbReference type="PROSITE" id="PS50023">
    <property type="entry name" value="LIM_DOMAIN_2"/>
    <property type="match status" value="1"/>
</dbReference>
<evidence type="ECO:0000250" key="1"/>
<evidence type="ECO:0000250" key="2">
    <source>
        <dbReference type="UniProtKB" id="Q7RTP6"/>
    </source>
</evidence>
<evidence type="ECO:0000255" key="3"/>
<evidence type="ECO:0000255" key="4">
    <source>
        <dbReference type="PROSITE-ProRule" id="PRU00044"/>
    </source>
</evidence>
<evidence type="ECO:0000255" key="5">
    <source>
        <dbReference type="PROSITE-ProRule" id="PRU00125"/>
    </source>
</evidence>
<evidence type="ECO:0000255" key="6">
    <source>
        <dbReference type="PROSITE-ProRule" id="PRU01195"/>
    </source>
</evidence>
<evidence type="ECO:0000256" key="7">
    <source>
        <dbReference type="SAM" id="MobiDB-lite"/>
    </source>
</evidence>
<evidence type="ECO:0000305" key="8"/>
<accession>F1QWK4</accession>
<accession>Q1LV75</accession>
<comment type="function">
    <text evidence="1">Monooxygenase that promotes depolymerization of F-actin by mediating oxidation of specific methionine residues on actin. Acts by modifying actin subunits through the addition of oxygen to form methionine-sulfoxide, leading to promote actin filament severing and prevent repolymerization. Involved in exocytic vesicles tethering and fusion: the monooxygenase activity is required for this process (By similarity).</text>
</comment>
<comment type="catalytic activity">
    <reaction evidence="2">
        <text>L-methionyl-[F-actin] + NADPH + O2 + H(+) = L-methionyl-(R)-S-oxide-[F-actin] + NADP(+) + H2O</text>
        <dbReference type="Rhea" id="RHEA:51308"/>
        <dbReference type="Rhea" id="RHEA-COMP:12953"/>
        <dbReference type="Rhea" id="RHEA-COMP:12956"/>
        <dbReference type="ChEBI" id="CHEBI:15377"/>
        <dbReference type="ChEBI" id="CHEBI:15378"/>
        <dbReference type="ChEBI" id="CHEBI:15379"/>
        <dbReference type="ChEBI" id="CHEBI:16044"/>
        <dbReference type="ChEBI" id="CHEBI:45764"/>
        <dbReference type="ChEBI" id="CHEBI:57783"/>
        <dbReference type="ChEBI" id="CHEBI:58349"/>
        <dbReference type="EC" id="1.14.13.225"/>
    </reaction>
</comment>
<comment type="cofactor">
    <cofactor evidence="1">
        <name>FAD</name>
        <dbReference type="ChEBI" id="CHEBI:57692"/>
    </cofactor>
</comment>
<comment type="subcellular location">
    <subcellularLocation>
        <location>Cytoplasm</location>
    </subcellularLocation>
    <subcellularLocation>
        <location>Cytoplasm</location>
        <location>Cytoskeleton</location>
    </subcellularLocation>
    <subcellularLocation>
        <location>Nucleus</location>
    </subcellularLocation>
    <text evidence="1">Mainly localizes in the nucleus.</text>
</comment>
<comment type="similarity">
    <text evidence="8">Belongs to the Mical family.</text>
</comment>
<comment type="sequence caution" evidence="8">
    <conflict type="erroneous gene model prediction">
        <sequence resource="EMBL-CDS" id="CAK05184"/>
    </conflict>
</comment>
<comment type="sequence caution" evidence="8">
    <conflict type="erroneous gene model prediction">
        <sequence resource="EMBL-CDS" id="CAK11365"/>
    </conflict>
</comment>
<name>MCA3B_DANRE</name>
<protein>
    <recommendedName>
        <fullName>Protein-methionine sulfoxide oxidase mical3b</fullName>
        <ecNumber evidence="2">1.14.13.225</ecNumber>
    </recommendedName>
    <alternativeName>
        <fullName>Molecule interacting with CasL protein 3B</fullName>
        <shortName>MICAL-3B</shortName>
    </alternativeName>
</protein>
<gene>
    <name type="primary">mical3b</name>
</gene>
<organism>
    <name type="scientific">Danio rerio</name>
    <name type="common">Zebrafish</name>
    <name type="synonym">Brachydanio rerio</name>
    <dbReference type="NCBI Taxonomy" id="7955"/>
    <lineage>
        <taxon>Eukaryota</taxon>
        <taxon>Metazoa</taxon>
        <taxon>Chordata</taxon>
        <taxon>Craniata</taxon>
        <taxon>Vertebrata</taxon>
        <taxon>Euteleostomi</taxon>
        <taxon>Actinopterygii</taxon>
        <taxon>Neopterygii</taxon>
        <taxon>Teleostei</taxon>
        <taxon>Ostariophysi</taxon>
        <taxon>Cypriniformes</taxon>
        <taxon>Danionidae</taxon>
        <taxon>Danioninae</taxon>
        <taxon>Danio</taxon>
    </lineage>
</organism>